<keyword id="KW-0067">ATP-binding</keyword>
<keyword id="KW-0319">Glycerol metabolism</keyword>
<keyword id="KW-0418">Kinase</keyword>
<keyword id="KW-0547">Nucleotide-binding</keyword>
<keyword id="KW-0808">Transferase</keyword>
<accession>Q6N3I8</accession>
<feature type="chain" id="PRO_1000020767" description="Glycerol kinase">
    <location>
        <begin position="1"/>
        <end position="500"/>
    </location>
</feature>
<feature type="binding site" evidence="1">
    <location>
        <position position="11"/>
    </location>
    <ligand>
        <name>ADP</name>
        <dbReference type="ChEBI" id="CHEBI:456216"/>
    </ligand>
</feature>
<feature type="binding site" evidence="1">
    <location>
        <position position="11"/>
    </location>
    <ligand>
        <name>ATP</name>
        <dbReference type="ChEBI" id="CHEBI:30616"/>
    </ligand>
</feature>
<feature type="binding site" evidence="1">
    <location>
        <position position="11"/>
    </location>
    <ligand>
        <name>sn-glycerol 3-phosphate</name>
        <dbReference type="ChEBI" id="CHEBI:57597"/>
    </ligand>
</feature>
<feature type="binding site" evidence="1">
    <location>
        <position position="12"/>
    </location>
    <ligand>
        <name>ATP</name>
        <dbReference type="ChEBI" id="CHEBI:30616"/>
    </ligand>
</feature>
<feature type="binding site" evidence="1">
    <location>
        <position position="13"/>
    </location>
    <ligand>
        <name>ATP</name>
        <dbReference type="ChEBI" id="CHEBI:30616"/>
    </ligand>
</feature>
<feature type="binding site" evidence="1">
    <location>
        <position position="15"/>
    </location>
    <ligand>
        <name>ADP</name>
        <dbReference type="ChEBI" id="CHEBI:456216"/>
    </ligand>
</feature>
<feature type="binding site" evidence="1">
    <location>
        <position position="81"/>
    </location>
    <ligand>
        <name>glycerol</name>
        <dbReference type="ChEBI" id="CHEBI:17754"/>
    </ligand>
</feature>
<feature type="binding site" evidence="1">
    <location>
        <position position="81"/>
    </location>
    <ligand>
        <name>sn-glycerol 3-phosphate</name>
        <dbReference type="ChEBI" id="CHEBI:57597"/>
    </ligand>
</feature>
<feature type="binding site" evidence="1">
    <location>
        <position position="82"/>
    </location>
    <ligand>
        <name>glycerol</name>
        <dbReference type="ChEBI" id="CHEBI:17754"/>
    </ligand>
</feature>
<feature type="binding site" evidence="1">
    <location>
        <position position="82"/>
    </location>
    <ligand>
        <name>sn-glycerol 3-phosphate</name>
        <dbReference type="ChEBI" id="CHEBI:57597"/>
    </ligand>
</feature>
<feature type="binding site" evidence="1">
    <location>
        <position position="133"/>
    </location>
    <ligand>
        <name>glycerol</name>
        <dbReference type="ChEBI" id="CHEBI:17754"/>
    </ligand>
</feature>
<feature type="binding site" evidence="1">
    <location>
        <position position="133"/>
    </location>
    <ligand>
        <name>sn-glycerol 3-phosphate</name>
        <dbReference type="ChEBI" id="CHEBI:57597"/>
    </ligand>
</feature>
<feature type="binding site" evidence="1">
    <location>
        <position position="242"/>
    </location>
    <ligand>
        <name>glycerol</name>
        <dbReference type="ChEBI" id="CHEBI:17754"/>
    </ligand>
</feature>
<feature type="binding site" evidence="1">
    <location>
        <position position="242"/>
    </location>
    <ligand>
        <name>sn-glycerol 3-phosphate</name>
        <dbReference type="ChEBI" id="CHEBI:57597"/>
    </ligand>
</feature>
<feature type="binding site" evidence="1">
    <location>
        <position position="243"/>
    </location>
    <ligand>
        <name>glycerol</name>
        <dbReference type="ChEBI" id="CHEBI:17754"/>
    </ligand>
</feature>
<feature type="binding site" evidence="1">
    <location>
        <position position="264"/>
    </location>
    <ligand>
        <name>ADP</name>
        <dbReference type="ChEBI" id="CHEBI:456216"/>
    </ligand>
</feature>
<feature type="binding site" evidence="1">
    <location>
        <position position="264"/>
    </location>
    <ligand>
        <name>ATP</name>
        <dbReference type="ChEBI" id="CHEBI:30616"/>
    </ligand>
</feature>
<feature type="binding site" evidence="1">
    <location>
        <position position="307"/>
    </location>
    <ligand>
        <name>ADP</name>
        <dbReference type="ChEBI" id="CHEBI:456216"/>
    </ligand>
</feature>
<feature type="binding site" evidence="1">
    <location>
        <position position="307"/>
    </location>
    <ligand>
        <name>ATP</name>
        <dbReference type="ChEBI" id="CHEBI:30616"/>
    </ligand>
</feature>
<feature type="binding site" evidence="1">
    <location>
        <position position="311"/>
    </location>
    <ligand>
        <name>ATP</name>
        <dbReference type="ChEBI" id="CHEBI:30616"/>
    </ligand>
</feature>
<feature type="binding site" evidence="1">
    <location>
        <position position="411"/>
    </location>
    <ligand>
        <name>ADP</name>
        <dbReference type="ChEBI" id="CHEBI:456216"/>
    </ligand>
</feature>
<feature type="binding site" evidence="1">
    <location>
        <position position="411"/>
    </location>
    <ligand>
        <name>ATP</name>
        <dbReference type="ChEBI" id="CHEBI:30616"/>
    </ligand>
</feature>
<name>GLPK_RHOPA</name>
<sequence>MPFVMAIDQGTTSSRAILFRSDISIAASAQQEFPQHFPASGWVEHEPEDIWATTIATCRAAMDKAGATAADIAAIGITNQRETVVVWDAVSGQAIHRAIVWQDRRTAEFCTRLKADGLEPMVTAKTGLIIDPYFSGTKVAWLLDNVPGARARAERGELKFGTVDCYLLWRLTGGKVHATDATNASRTLLFNIHDGAWDDELLKLLGVPRSMLPEVKDSSAHFGDSVPELFGGSITIRGIAGDQQAATIGQACFTPGMIKSTYGTGCFALLNTGATPVKSNNKLLTTVAYQLDGKRTYALEGSIFVAGSAVQWLRDGLGVIKHASETGPLADKSDSAQSVYLVPAFVGMGAPYWNPRVRGALFGLTRNTGPAELAHAALESVCYQTFDLWAAMRADWPDADAATTVLRVDGGMTASDWTMQRLADLLDAPVDRPVIQETTALGAAYLAGLSAGVFPEPQKFADNWRLDHRFRPAMSAATRERKLAGWGRAVKGLLATDEGE</sequence>
<comment type="function">
    <text evidence="1">Key enzyme in the regulation of glycerol uptake and metabolism. Catalyzes the phosphorylation of glycerol to yield sn-glycerol 3-phosphate.</text>
</comment>
<comment type="catalytic activity">
    <reaction evidence="1">
        <text>glycerol + ATP = sn-glycerol 3-phosphate + ADP + H(+)</text>
        <dbReference type="Rhea" id="RHEA:21644"/>
        <dbReference type="ChEBI" id="CHEBI:15378"/>
        <dbReference type="ChEBI" id="CHEBI:17754"/>
        <dbReference type="ChEBI" id="CHEBI:30616"/>
        <dbReference type="ChEBI" id="CHEBI:57597"/>
        <dbReference type="ChEBI" id="CHEBI:456216"/>
        <dbReference type="EC" id="2.7.1.30"/>
    </reaction>
</comment>
<comment type="activity regulation">
    <text evidence="1">Inhibited by fructose 1,6-bisphosphate (FBP).</text>
</comment>
<comment type="pathway">
    <text evidence="1">Polyol metabolism; glycerol degradation via glycerol kinase pathway; sn-glycerol 3-phosphate from glycerol: step 1/1.</text>
</comment>
<comment type="similarity">
    <text evidence="1">Belongs to the FGGY kinase family.</text>
</comment>
<proteinExistence type="inferred from homology"/>
<organism>
    <name type="scientific">Rhodopseudomonas palustris (strain ATCC BAA-98 / CGA009)</name>
    <dbReference type="NCBI Taxonomy" id="258594"/>
    <lineage>
        <taxon>Bacteria</taxon>
        <taxon>Pseudomonadati</taxon>
        <taxon>Pseudomonadota</taxon>
        <taxon>Alphaproteobacteria</taxon>
        <taxon>Hyphomicrobiales</taxon>
        <taxon>Nitrobacteraceae</taxon>
        <taxon>Rhodopseudomonas</taxon>
    </lineage>
</organism>
<dbReference type="EC" id="2.7.1.30" evidence="1"/>
<dbReference type="EMBL" id="BX572604">
    <property type="protein sequence ID" value="CAE29146.1"/>
    <property type="molecule type" value="Genomic_DNA"/>
</dbReference>
<dbReference type="RefSeq" id="WP_011159244.1">
    <property type="nucleotide sequence ID" value="NZ_CP116810.1"/>
</dbReference>
<dbReference type="SMR" id="Q6N3I8"/>
<dbReference type="STRING" id="258594.RPA3705"/>
<dbReference type="GeneID" id="66894810"/>
<dbReference type="eggNOG" id="COG0554">
    <property type="taxonomic scope" value="Bacteria"/>
</dbReference>
<dbReference type="HOGENOM" id="CLU_009281_2_3_5"/>
<dbReference type="PhylomeDB" id="Q6N3I8"/>
<dbReference type="UniPathway" id="UPA00618">
    <property type="reaction ID" value="UER00672"/>
</dbReference>
<dbReference type="GO" id="GO:0005829">
    <property type="term" value="C:cytosol"/>
    <property type="evidence" value="ECO:0007669"/>
    <property type="project" value="TreeGrafter"/>
</dbReference>
<dbReference type="GO" id="GO:0005524">
    <property type="term" value="F:ATP binding"/>
    <property type="evidence" value="ECO:0007669"/>
    <property type="project" value="UniProtKB-UniRule"/>
</dbReference>
<dbReference type="GO" id="GO:0004370">
    <property type="term" value="F:glycerol kinase activity"/>
    <property type="evidence" value="ECO:0000250"/>
    <property type="project" value="UniProtKB"/>
</dbReference>
<dbReference type="GO" id="GO:0019563">
    <property type="term" value="P:glycerol catabolic process"/>
    <property type="evidence" value="ECO:0007669"/>
    <property type="project" value="UniProtKB-UniRule"/>
</dbReference>
<dbReference type="GO" id="GO:0006071">
    <property type="term" value="P:glycerol metabolic process"/>
    <property type="evidence" value="ECO:0000250"/>
    <property type="project" value="UniProtKB"/>
</dbReference>
<dbReference type="GO" id="GO:0006072">
    <property type="term" value="P:glycerol-3-phosphate metabolic process"/>
    <property type="evidence" value="ECO:0007669"/>
    <property type="project" value="InterPro"/>
</dbReference>
<dbReference type="CDD" id="cd07786">
    <property type="entry name" value="FGGY_EcGK_like"/>
    <property type="match status" value="1"/>
</dbReference>
<dbReference type="FunFam" id="3.30.420.40:FF:000007">
    <property type="entry name" value="Glycerol kinase"/>
    <property type="match status" value="1"/>
</dbReference>
<dbReference type="FunFam" id="3.30.420.40:FF:000008">
    <property type="entry name" value="Glycerol kinase"/>
    <property type="match status" value="1"/>
</dbReference>
<dbReference type="Gene3D" id="3.30.420.40">
    <property type="match status" value="2"/>
</dbReference>
<dbReference type="HAMAP" id="MF_00186">
    <property type="entry name" value="Glycerol_kin"/>
    <property type="match status" value="1"/>
</dbReference>
<dbReference type="InterPro" id="IPR043129">
    <property type="entry name" value="ATPase_NBD"/>
</dbReference>
<dbReference type="InterPro" id="IPR000577">
    <property type="entry name" value="Carb_kinase_FGGY"/>
</dbReference>
<dbReference type="InterPro" id="IPR018483">
    <property type="entry name" value="Carb_kinase_FGGY_CS"/>
</dbReference>
<dbReference type="InterPro" id="IPR018485">
    <property type="entry name" value="FGGY_C"/>
</dbReference>
<dbReference type="InterPro" id="IPR018484">
    <property type="entry name" value="FGGY_N"/>
</dbReference>
<dbReference type="InterPro" id="IPR005999">
    <property type="entry name" value="Glycerol_kin"/>
</dbReference>
<dbReference type="NCBIfam" id="TIGR01311">
    <property type="entry name" value="glycerol_kin"/>
    <property type="match status" value="1"/>
</dbReference>
<dbReference type="NCBIfam" id="NF000756">
    <property type="entry name" value="PRK00047.1"/>
    <property type="match status" value="1"/>
</dbReference>
<dbReference type="PANTHER" id="PTHR10196:SF78">
    <property type="entry name" value="GLYCEROL KINASE"/>
    <property type="match status" value="1"/>
</dbReference>
<dbReference type="PANTHER" id="PTHR10196">
    <property type="entry name" value="SUGAR KINASE"/>
    <property type="match status" value="1"/>
</dbReference>
<dbReference type="Pfam" id="PF02782">
    <property type="entry name" value="FGGY_C"/>
    <property type="match status" value="1"/>
</dbReference>
<dbReference type="Pfam" id="PF00370">
    <property type="entry name" value="FGGY_N"/>
    <property type="match status" value="1"/>
</dbReference>
<dbReference type="PIRSF" id="PIRSF000538">
    <property type="entry name" value="GlpK"/>
    <property type="match status" value="1"/>
</dbReference>
<dbReference type="SUPFAM" id="SSF53067">
    <property type="entry name" value="Actin-like ATPase domain"/>
    <property type="match status" value="2"/>
</dbReference>
<dbReference type="PROSITE" id="PS00933">
    <property type="entry name" value="FGGY_KINASES_1"/>
    <property type="match status" value="1"/>
</dbReference>
<dbReference type="PROSITE" id="PS00445">
    <property type="entry name" value="FGGY_KINASES_2"/>
    <property type="match status" value="1"/>
</dbReference>
<protein>
    <recommendedName>
        <fullName evidence="1">Glycerol kinase</fullName>
        <ecNumber evidence="1">2.7.1.30</ecNumber>
    </recommendedName>
    <alternativeName>
        <fullName evidence="1">ATP:glycerol 3-phosphotransferase</fullName>
    </alternativeName>
    <alternativeName>
        <fullName evidence="1">Glycerokinase</fullName>
        <shortName evidence="1">GK</shortName>
    </alternativeName>
</protein>
<reference key="1">
    <citation type="journal article" date="2004" name="Nat. Biotechnol.">
        <title>Complete genome sequence of the metabolically versatile photosynthetic bacterium Rhodopseudomonas palustris.</title>
        <authorList>
            <person name="Larimer F.W."/>
            <person name="Chain P."/>
            <person name="Hauser L."/>
            <person name="Lamerdin J.E."/>
            <person name="Malfatti S."/>
            <person name="Do L."/>
            <person name="Land M.L."/>
            <person name="Pelletier D.A."/>
            <person name="Beatty J.T."/>
            <person name="Lang A.S."/>
            <person name="Tabita F.R."/>
            <person name="Gibson J.L."/>
            <person name="Hanson T.E."/>
            <person name="Bobst C."/>
            <person name="Torres y Torres J.L."/>
            <person name="Peres C."/>
            <person name="Harrison F.H."/>
            <person name="Gibson J."/>
            <person name="Harwood C.S."/>
        </authorList>
    </citation>
    <scope>NUCLEOTIDE SEQUENCE [LARGE SCALE GENOMIC DNA]</scope>
    <source>
        <strain>ATCC BAA-98 / CGA009</strain>
    </source>
</reference>
<evidence type="ECO:0000255" key="1">
    <source>
        <dbReference type="HAMAP-Rule" id="MF_00186"/>
    </source>
</evidence>
<gene>
    <name evidence="1" type="primary">glpK</name>
    <name type="ordered locus">RPA3705</name>
</gene>